<gene>
    <name evidence="1" type="primary">nfo</name>
    <name type="ordered locus">SSP1199</name>
</gene>
<reference key="1">
    <citation type="journal article" date="2005" name="Proc. Natl. Acad. Sci. U.S.A.">
        <title>Whole genome sequence of Staphylococcus saprophyticus reveals the pathogenesis of uncomplicated urinary tract infection.</title>
        <authorList>
            <person name="Kuroda M."/>
            <person name="Yamashita A."/>
            <person name="Hirakawa H."/>
            <person name="Kumano M."/>
            <person name="Morikawa K."/>
            <person name="Higashide M."/>
            <person name="Maruyama A."/>
            <person name="Inose Y."/>
            <person name="Matoba K."/>
            <person name="Toh H."/>
            <person name="Kuhara S."/>
            <person name="Hattori M."/>
            <person name="Ohta T."/>
        </authorList>
    </citation>
    <scope>NUCLEOTIDE SEQUENCE [LARGE SCALE GENOMIC DNA]</scope>
    <source>
        <strain>ATCC 15305 / DSM 20229 / NCIMB 8711 / NCTC 7292 / S-41</strain>
    </source>
</reference>
<accession>Q49Y00</accession>
<proteinExistence type="inferred from homology"/>
<protein>
    <recommendedName>
        <fullName evidence="1">Probable endonuclease 4</fullName>
        <ecNumber evidence="1">3.1.21.2</ecNumber>
    </recommendedName>
    <alternativeName>
        <fullName evidence="1">Endodeoxyribonuclease IV</fullName>
    </alternativeName>
    <alternativeName>
        <fullName evidence="1">Endonuclease IV</fullName>
    </alternativeName>
</protein>
<feature type="chain" id="PRO_1000011341" description="Probable endonuclease 4">
    <location>
        <begin position="1"/>
        <end position="296"/>
    </location>
</feature>
<feature type="binding site" evidence="1">
    <location>
        <position position="68"/>
    </location>
    <ligand>
        <name>Zn(2+)</name>
        <dbReference type="ChEBI" id="CHEBI:29105"/>
        <label>1</label>
    </ligand>
</feature>
<feature type="binding site" evidence="1">
    <location>
        <position position="109"/>
    </location>
    <ligand>
        <name>Zn(2+)</name>
        <dbReference type="ChEBI" id="CHEBI:29105"/>
        <label>1</label>
    </ligand>
</feature>
<feature type="binding site" evidence="1">
    <location>
        <position position="144"/>
    </location>
    <ligand>
        <name>Zn(2+)</name>
        <dbReference type="ChEBI" id="CHEBI:29105"/>
        <label>1</label>
    </ligand>
</feature>
<feature type="binding site" evidence="1">
    <location>
        <position position="144"/>
    </location>
    <ligand>
        <name>Zn(2+)</name>
        <dbReference type="ChEBI" id="CHEBI:29105"/>
        <label>2</label>
    </ligand>
</feature>
<feature type="binding site" evidence="1">
    <location>
        <position position="178"/>
    </location>
    <ligand>
        <name>Zn(2+)</name>
        <dbReference type="ChEBI" id="CHEBI:29105"/>
        <label>2</label>
    </ligand>
</feature>
<feature type="binding site" evidence="1">
    <location>
        <position position="181"/>
    </location>
    <ligand>
        <name>Zn(2+)</name>
        <dbReference type="ChEBI" id="CHEBI:29105"/>
        <label>3</label>
    </ligand>
</feature>
<feature type="binding site" evidence="1">
    <location>
        <position position="213"/>
    </location>
    <ligand>
        <name>Zn(2+)</name>
        <dbReference type="ChEBI" id="CHEBI:29105"/>
        <label>2</label>
    </ligand>
</feature>
<feature type="binding site" evidence="1">
    <location>
        <position position="226"/>
    </location>
    <ligand>
        <name>Zn(2+)</name>
        <dbReference type="ChEBI" id="CHEBI:29105"/>
        <label>3</label>
    </ligand>
</feature>
<feature type="binding site" evidence="1">
    <location>
        <position position="228"/>
    </location>
    <ligand>
        <name>Zn(2+)</name>
        <dbReference type="ChEBI" id="CHEBI:29105"/>
        <label>3</label>
    </ligand>
</feature>
<feature type="binding site" evidence="1">
    <location>
        <position position="258"/>
    </location>
    <ligand>
        <name>Zn(2+)</name>
        <dbReference type="ChEBI" id="CHEBI:29105"/>
        <label>2</label>
    </ligand>
</feature>
<evidence type="ECO:0000255" key="1">
    <source>
        <dbReference type="HAMAP-Rule" id="MF_00152"/>
    </source>
</evidence>
<organism>
    <name type="scientific">Staphylococcus saprophyticus subsp. saprophyticus (strain ATCC 15305 / DSM 20229 / NCIMB 8711 / NCTC 7292 / S-41)</name>
    <dbReference type="NCBI Taxonomy" id="342451"/>
    <lineage>
        <taxon>Bacteria</taxon>
        <taxon>Bacillati</taxon>
        <taxon>Bacillota</taxon>
        <taxon>Bacilli</taxon>
        <taxon>Bacillales</taxon>
        <taxon>Staphylococcaceae</taxon>
        <taxon>Staphylococcus</taxon>
    </lineage>
</organism>
<sequence>MLLGSHVSMNGKKMLEGSAEEAHKFGESTFMIYTGAPQNTRRKPIEELNIEKGHEIMKAHGLSNIVVHAPYIINIANTVKPHVFELGVEFLQSEIERTQALGAQDIVLHPGSHVGEGTDAGIKKIIEGLNEVLTNDNNVRIALETMAGKGSEVGRNFEELARIIDGVNHNDRLSVCFDTCHTHDAGYNVKEDFDGVLNEFDKIIGVDRIKVVHVNDSKNDIGAHKDRHENIGFGYIGFDALNYVVHHDTFKDIPKILETPYVGEDKKNKKPPYKLEIEMLKQQKFDEDLKNKILQQ</sequence>
<comment type="function">
    <text evidence="1">Endonuclease IV plays a role in DNA repair. It cleaves phosphodiester bonds at apurinic or apyrimidinic (AP) sites, generating a 3'-hydroxyl group and a 5'-terminal sugar phosphate.</text>
</comment>
<comment type="catalytic activity">
    <reaction evidence="1">
        <text>Endonucleolytic cleavage to 5'-phosphooligonucleotide end-products.</text>
        <dbReference type="EC" id="3.1.21.2"/>
    </reaction>
</comment>
<comment type="cofactor">
    <cofactor evidence="1">
        <name>Zn(2+)</name>
        <dbReference type="ChEBI" id="CHEBI:29105"/>
    </cofactor>
    <text evidence="1">Binds 3 Zn(2+) ions.</text>
</comment>
<comment type="similarity">
    <text evidence="1">Belongs to the AP endonuclease 2 family.</text>
</comment>
<name>END4_STAS1</name>
<dbReference type="EC" id="3.1.21.2" evidence="1"/>
<dbReference type="EMBL" id="AP008934">
    <property type="protein sequence ID" value="BAE18344.1"/>
    <property type="molecule type" value="Genomic_DNA"/>
</dbReference>
<dbReference type="RefSeq" id="WP_011303011.1">
    <property type="nucleotide sequence ID" value="NZ_MTGA01000038.1"/>
</dbReference>
<dbReference type="SMR" id="Q49Y00"/>
<dbReference type="GeneID" id="3616946"/>
<dbReference type="KEGG" id="ssp:SSP1199"/>
<dbReference type="PATRIC" id="fig|342451.11.peg.1197"/>
<dbReference type="eggNOG" id="COG0648">
    <property type="taxonomic scope" value="Bacteria"/>
</dbReference>
<dbReference type="HOGENOM" id="CLU_025885_4_1_9"/>
<dbReference type="OrthoDB" id="9805666at2"/>
<dbReference type="Proteomes" id="UP000006371">
    <property type="component" value="Chromosome"/>
</dbReference>
<dbReference type="GO" id="GO:0008833">
    <property type="term" value="F:deoxyribonuclease IV (phage-T4-induced) activity"/>
    <property type="evidence" value="ECO:0007669"/>
    <property type="project" value="UniProtKB-UniRule"/>
</dbReference>
<dbReference type="GO" id="GO:0003677">
    <property type="term" value="F:DNA binding"/>
    <property type="evidence" value="ECO:0007669"/>
    <property type="project" value="InterPro"/>
</dbReference>
<dbReference type="GO" id="GO:0003906">
    <property type="term" value="F:DNA-(apurinic or apyrimidinic site) endonuclease activity"/>
    <property type="evidence" value="ECO:0007669"/>
    <property type="project" value="TreeGrafter"/>
</dbReference>
<dbReference type="GO" id="GO:0008081">
    <property type="term" value="F:phosphoric diester hydrolase activity"/>
    <property type="evidence" value="ECO:0007669"/>
    <property type="project" value="TreeGrafter"/>
</dbReference>
<dbReference type="GO" id="GO:0008270">
    <property type="term" value="F:zinc ion binding"/>
    <property type="evidence" value="ECO:0007669"/>
    <property type="project" value="UniProtKB-UniRule"/>
</dbReference>
<dbReference type="GO" id="GO:0006284">
    <property type="term" value="P:base-excision repair"/>
    <property type="evidence" value="ECO:0007669"/>
    <property type="project" value="TreeGrafter"/>
</dbReference>
<dbReference type="CDD" id="cd00019">
    <property type="entry name" value="AP2Ec"/>
    <property type="match status" value="1"/>
</dbReference>
<dbReference type="FunFam" id="3.20.20.150:FF:000001">
    <property type="entry name" value="Probable endonuclease 4"/>
    <property type="match status" value="1"/>
</dbReference>
<dbReference type="Gene3D" id="3.20.20.150">
    <property type="entry name" value="Divalent-metal-dependent TIM barrel enzymes"/>
    <property type="match status" value="1"/>
</dbReference>
<dbReference type="HAMAP" id="MF_00152">
    <property type="entry name" value="Nfo"/>
    <property type="match status" value="1"/>
</dbReference>
<dbReference type="InterPro" id="IPR001719">
    <property type="entry name" value="AP_endonuc_2"/>
</dbReference>
<dbReference type="InterPro" id="IPR018246">
    <property type="entry name" value="AP_endonuc_F2_Zn_BS"/>
</dbReference>
<dbReference type="InterPro" id="IPR036237">
    <property type="entry name" value="Xyl_isomerase-like_sf"/>
</dbReference>
<dbReference type="InterPro" id="IPR013022">
    <property type="entry name" value="Xyl_isomerase-like_TIM-brl"/>
</dbReference>
<dbReference type="NCBIfam" id="TIGR00587">
    <property type="entry name" value="nfo"/>
    <property type="match status" value="1"/>
</dbReference>
<dbReference type="NCBIfam" id="NF002196">
    <property type="entry name" value="PRK01060.1-1"/>
    <property type="match status" value="1"/>
</dbReference>
<dbReference type="PANTHER" id="PTHR21445:SF0">
    <property type="entry name" value="APURINIC-APYRIMIDINIC ENDONUCLEASE"/>
    <property type="match status" value="1"/>
</dbReference>
<dbReference type="PANTHER" id="PTHR21445">
    <property type="entry name" value="ENDONUCLEASE IV ENDODEOXYRIBONUCLEASE IV"/>
    <property type="match status" value="1"/>
</dbReference>
<dbReference type="Pfam" id="PF01261">
    <property type="entry name" value="AP_endonuc_2"/>
    <property type="match status" value="1"/>
</dbReference>
<dbReference type="SMART" id="SM00518">
    <property type="entry name" value="AP2Ec"/>
    <property type="match status" value="1"/>
</dbReference>
<dbReference type="SUPFAM" id="SSF51658">
    <property type="entry name" value="Xylose isomerase-like"/>
    <property type="match status" value="1"/>
</dbReference>
<dbReference type="PROSITE" id="PS00729">
    <property type="entry name" value="AP_NUCLEASE_F2_1"/>
    <property type="match status" value="1"/>
</dbReference>
<dbReference type="PROSITE" id="PS00730">
    <property type="entry name" value="AP_NUCLEASE_F2_2"/>
    <property type="match status" value="1"/>
</dbReference>
<dbReference type="PROSITE" id="PS00731">
    <property type="entry name" value="AP_NUCLEASE_F2_3"/>
    <property type="match status" value="1"/>
</dbReference>
<dbReference type="PROSITE" id="PS51432">
    <property type="entry name" value="AP_NUCLEASE_F2_4"/>
    <property type="match status" value="1"/>
</dbReference>
<keyword id="KW-0227">DNA damage</keyword>
<keyword id="KW-0234">DNA repair</keyword>
<keyword id="KW-0255">Endonuclease</keyword>
<keyword id="KW-0378">Hydrolase</keyword>
<keyword id="KW-0479">Metal-binding</keyword>
<keyword id="KW-0540">Nuclease</keyword>
<keyword id="KW-1185">Reference proteome</keyword>
<keyword id="KW-0862">Zinc</keyword>